<organism>
    <name type="scientific">Francisella philomiragia subsp. philomiragia (strain ATCC 25017 / CCUG 19701 / FSC 153 / O#319-036)</name>
    <dbReference type="NCBI Taxonomy" id="484022"/>
    <lineage>
        <taxon>Bacteria</taxon>
        <taxon>Pseudomonadati</taxon>
        <taxon>Pseudomonadota</taxon>
        <taxon>Gammaproteobacteria</taxon>
        <taxon>Thiotrichales</taxon>
        <taxon>Francisellaceae</taxon>
        <taxon>Francisella</taxon>
    </lineage>
</organism>
<feature type="chain" id="PRO_1000075134" description="Elongation factor 4">
    <location>
        <begin position="1"/>
        <end position="594"/>
    </location>
</feature>
<feature type="domain" description="tr-type G">
    <location>
        <begin position="2"/>
        <end position="184"/>
    </location>
</feature>
<feature type="binding site" evidence="1">
    <location>
        <begin position="14"/>
        <end position="19"/>
    </location>
    <ligand>
        <name>GTP</name>
        <dbReference type="ChEBI" id="CHEBI:37565"/>
    </ligand>
</feature>
<feature type="binding site" evidence="1">
    <location>
        <begin position="131"/>
        <end position="134"/>
    </location>
    <ligand>
        <name>GTP</name>
        <dbReference type="ChEBI" id="CHEBI:37565"/>
    </ligand>
</feature>
<comment type="function">
    <text evidence="1">Required for accurate and efficient protein synthesis under certain stress conditions. May act as a fidelity factor of the translation reaction, by catalyzing a one-codon backward translocation of tRNAs on improperly translocated ribosomes. Back-translocation proceeds from a post-translocation (POST) complex to a pre-translocation (PRE) complex, thus giving elongation factor G a second chance to translocate the tRNAs correctly. Binds to ribosomes in a GTP-dependent manner.</text>
</comment>
<comment type="catalytic activity">
    <reaction evidence="1">
        <text>GTP + H2O = GDP + phosphate + H(+)</text>
        <dbReference type="Rhea" id="RHEA:19669"/>
        <dbReference type="ChEBI" id="CHEBI:15377"/>
        <dbReference type="ChEBI" id="CHEBI:15378"/>
        <dbReference type="ChEBI" id="CHEBI:37565"/>
        <dbReference type="ChEBI" id="CHEBI:43474"/>
        <dbReference type="ChEBI" id="CHEBI:58189"/>
        <dbReference type="EC" id="3.6.5.n1"/>
    </reaction>
</comment>
<comment type="subcellular location">
    <subcellularLocation>
        <location evidence="1">Cell inner membrane</location>
        <topology evidence="1">Peripheral membrane protein</topology>
        <orientation evidence="1">Cytoplasmic side</orientation>
    </subcellularLocation>
</comment>
<comment type="similarity">
    <text evidence="1">Belongs to the TRAFAC class translation factor GTPase superfamily. Classic translation factor GTPase family. LepA subfamily.</text>
</comment>
<protein>
    <recommendedName>
        <fullName evidence="1">Elongation factor 4</fullName>
        <shortName evidence="1">EF-4</shortName>
        <ecNumber evidence="1">3.6.5.n1</ecNumber>
    </recommendedName>
    <alternativeName>
        <fullName evidence="1">Ribosomal back-translocase LepA</fullName>
    </alternativeName>
</protein>
<dbReference type="EC" id="3.6.5.n1" evidence="1"/>
<dbReference type="EMBL" id="CP000937">
    <property type="protein sequence ID" value="ABZ86941.1"/>
    <property type="molecule type" value="Genomic_DNA"/>
</dbReference>
<dbReference type="SMR" id="B0TW33"/>
<dbReference type="KEGG" id="fph:Fphi_0720"/>
<dbReference type="eggNOG" id="COG0481">
    <property type="taxonomic scope" value="Bacteria"/>
</dbReference>
<dbReference type="HOGENOM" id="CLU_009995_3_3_6"/>
<dbReference type="GO" id="GO:0005886">
    <property type="term" value="C:plasma membrane"/>
    <property type="evidence" value="ECO:0007669"/>
    <property type="project" value="UniProtKB-SubCell"/>
</dbReference>
<dbReference type="GO" id="GO:0005525">
    <property type="term" value="F:GTP binding"/>
    <property type="evidence" value="ECO:0007669"/>
    <property type="project" value="UniProtKB-UniRule"/>
</dbReference>
<dbReference type="GO" id="GO:0003924">
    <property type="term" value="F:GTPase activity"/>
    <property type="evidence" value="ECO:0007669"/>
    <property type="project" value="UniProtKB-UniRule"/>
</dbReference>
<dbReference type="GO" id="GO:0097216">
    <property type="term" value="F:guanosine tetraphosphate binding"/>
    <property type="evidence" value="ECO:0007669"/>
    <property type="project" value="UniProtKB-ARBA"/>
</dbReference>
<dbReference type="GO" id="GO:0043022">
    <property type="term" value="F:ribosome binding"/>
    <property type="evidence" value="ECO:0007669"/>
    <property type="project" value="UniProtKB-UniRule"/>
</dbReference>
<dbReference type="GO" id="GO:0003746">
    <property type="term" value="F:translation elongation factor activity"/>
    <property type="evidence" value="ECO:0007669"/>
    <property type="project" value="UniProtKB-UniRule"/>
</dbReference>
<dbReference type="GO" id="GO:0045727">
    <property type="term" value="P:positive regulation of translation"/>
    <property type="evidence" value="ECO:0007669"/>
    <property type="project" value="UniProtKB-UniRule"/>
</dbReference>
<dbReference type="CDD" id="cd03699">
    <property type="entry name" value="EF4_II"/>
    <property type="match status" value="1"/>
</dbReference>
<dbReference type="CDD" id="cd16260">
    <property type="entry name" value="EF4_III"/>
    <property type="match status" value="1"/>
</dbReference>
<dbReference type="CDD" id="cd01890">
    <property type="entry name" value="LepA"/>
    <property type="match status" value="1"/>
</dbReference>
<dbReference type="CDD" id="cd03709">
    <property type="entry name" value="lepA_C"/>
    <property type="match status" value="1"/>
</dbReference>
<dbReference type="FunFam" id="3.40.50.300:FF:000078">
    <property type="entry name" value="Elongation factor 4"/>
    <property type="match status" value="1"/>
</dbReference>
<dbReference type="FunFam" id="2.40.30.10:FF:000015">
    <property type="entry name" value="Translation factor GUF1, mitochondrial"/>
    <property type="match status" value="1"/>
</dbReference>
<dbReference type="FunFam" id="3.30.70.240:FF:000007">
    <property type="entry name" value="Translation factor GUF1, mitochondrial"/>
    <property type="match status" value="1"/>
</dbReference>
<dbReference type="FunFam" id="3.30.70.2570:FF:000001">
    <property type="entry name" value="Translation factor GUF1, mitochondrial"/>
    <property type="match status" value="1"/>
</dbReference>
<dbReference type="FunFam" id="3.30.70.870:FF:000004">
    <property type="entry name" value="Translation factor GUF1, mitochondrial"/>
    <property type="match status" value="1"/>
</dbReference>
<dbReference type="Gene3D" id="3.30.70.240">
    <property type="match status" value="1"/>
</dbReference>
<dbReference type="Gene3D" id="3.30.70.2570">
    <property type="entry name" value="Elongation factor 4, C-terminal domain"/>
    <property type="match status" value="1"/>
</dbReference>
<dbReference type="Gene3D" id="3.30.70.870">
    <property type="entry name" value="Elongation Factor G (Translational Gtpase), domain 3"/>
    <property type="match status" value="1"/>
</dbReference>
<dbReference type="Gene3D" id="3.40.50.300">
    <property type="entry name" value="P-loop containing nucleotide triphosphate hydrolases"/>
    <property type="match status" value="1"/>
</dbReference>
<dbReference type="Gene3D" id="2.40.30.10">
    <property type="entry name" value="Translation factors"/>
    <property type="match status" value="1"/>
</dbReference>
<dbReference type="HAMAP" id="MF_00071">
    <property type="entry name" value="LepA"/>
    <property type="match status" value="1"/>
</dbReference>
<dbReference type="InterPro" id="IPR006297">
    <property type="entry name" value="EF-4"/>
</dbReference>
<dbReference type="InterPro" id="IPR035647">
    <property type="entry name" value="EFG_III/V"/>
</dbReference>
<dbReference type="InterPro" id="IPR000640">
    <property type="entry name" value="EFG_V-like"/>
</dbReference>
<dbReference type="InterPro" id="IPR004161">
    <property type="entry name" value="EFTu-like_2"/>
</dbReference>
<dbReference type="InterPro" id="IPR031157">
    <property type="entry name" value="G_TR_CS"/>
</dbReference>
<dbReference type="InterPro" id="IPR038363">
    <property type="entry name" value="LepA_C_sf"/>
</dbReference>
<dbReference type="InterPro" id="IPR013842">
    <property type="entry name" value="LepA_CTD"/>
</dbReference>
<dbReference type="InterPro" id="IPR035654">
    <property type="entry name" value="LepA_IV"/>
</dbReference>
<dbReference type="InterPro" id="IPR027417">
    <property type="entry name" value="P-loop_NTPase"/>
</dbReference>
<dbReference type="InterPro" id="IPR005225">
    <property type="entry name" value="Small_GTP-bd"/>
</dbReference>
<dbReference type="InterPro" id="IPR000795">
    <property type="entry name" value="T_Tr_GTP-bd_dom"/>
</dbReference>
<dbReference type="NCBIfam" id="TIGR01393">
    <property type="entry name" value="lepA"/>
    <property type="match status" value="1"/>
</dbReference>
<dbReference type="NCBIfam" id="TIGR00231">
    <property type="entry name" value="small_GTP"/>
    <property type="match status" value="1"/>
</dbReference>
<dbReference type="PANTHER" id="PTHR43512:SF4">
    <property type="entry name" value="TRANSLATION FACTOR GUF1 HOMOLOG, CHLOROPLASTIC"/>
    <property type="match status" value="1"/>
</dbReference>
<dbReference type="PANTHER" id="PTHR43512">
    <property type="entry name" value="TRANSLATION FACTOR GUF1-RELATED"/>
    <property type="match status" value="1"/>
</dbReference>
<dbReference type="Pfam" id="PF00679">
    <property type="entry name" value="EFG_C"/>
    <property type="match status" value="1"/>
</dbReference>
<dbReference type="Pfam" id="PF00009">
    <property type="entry name" value="GTP_EFTU"/>
    <property type="match status" value="1"/>
</dbReference>
<dbReference type="Pfam" id="PF03144">
    <property type="entry name" value="GTP_EFTU_D2"/>
    <property type="match status" value="1"/>
</dbReference>
<dbReference type="Pfam" id="PF06421">
    <property type="entry name" value="LepA_C"/>
    <property type="match status" value="1"/>
</dbReference>
<dbReference type="PRINTS" id="PR00315">
    <property type="entry name" value="ELONGATNFCT"/>
</dbReference>
<dbReference type="SUPFAM" id="SSF54980">
    <property type="entry name" value="EF-G C-terminal domain-like"/>
    <property type="match status" value="2"/>
</dbReference>
<dbReference type="SUPFAM" id="SSF52540">
    <property type="entry name" value="P-loop containing nucleoside triphosphate hydrolases"/>
    <property type="match status" value="1"/>
</dbReference>
<dbReference type="PROSITE" id="PS00301">
    <property type="entry name" value="G_TR_1"/>
    <property type="match status" value="1"/>
</dbReference>
<dbReference type="PROSITE" id="PS51722">
    <property type="entry name" value="G_TR_2"/>
    <property type="match status" value="1"/>
</dbReference>
<sequence>MKNIRNFSIIAHIDHGKSTLSDRFIQVCNGLSEREMKEQVLDSMDIERERGITIKAQSVTLDYVARDGQTYQLNFIDTPGHVDFSYEVSRSLAACEGALLVVDAAQGVEAQTVANCYTAIEQNLEVIPILNKIDLPSAEPDRVAEEIEEIIGIDATGATTCSAKTGIGVEDVLETIVAKVPAPEGDVNAKLQALIIDSWFDNYLGVVSLVRIKNGTLKKGEKFKVMSTGVSYQVDRVGVFTPKMKDLDHLKAGEVGFIVAGIKDIHGAPVGDTLTHTHNPTDKPVPGFKKVQPQVYAGMFTISSDDYPDFREALDKLSLNDASLFFEPEVSQALGFGFRCGFLGMLHMEIIQERLEREYNLDLITSAPTVVYKAVKKDGETIDVDSPSKLPEPGAIAEIHEPIVRANILVPKDYVGSVITICVEKRGVQVDLNYVGSQVSITYDLPMIEVVSDFFDTLKSVTKGYGSLDYELIRYEAADMVRLDVLINGDKVDALASIVHKDQAKYKGRELVERLKELIPRQMFEVAIQAAIGGTIVARSTVKALRKNVLAKCYGGDVSRKKKLLEKQKEGKKRMKNIGSVEIPQEAFLSVLKK</sequence>
<accession>B0TW33</accession>
<gene>
    <name evidence="1" type="primary">lepA</name>
    <name type="ordered locus">Fphi_0720</name>
</gene>
<name>LEPA_FRAP2</name>
<reference key="1">
    <citation type="submission" date="2007-12" db="EMBL/GenBank/DDBJ databases">
        <title>Complete sequence of chromosome of Francisella philomiragia subsp. philomiragia ATCC 25017.</title>
        <authorList>
            <consortium name="US DOE Joint Genome Institute"/>
            <person name="Copeland A."/>
            <person name="Lucas S."/>
            <person name="Lapidus A."/>
            <person name="Barry K."/>
            <person name="Detter J.C."/>
            <person name="Glavina del Rio T."/>
            <person name="Hammon N."/>
            <person name="Israni S."/>
            <person name="Dalin E."/>
            <person name="Tice H."/>
            <person name="Pitluck S."/>
            <person name="Chain P."/>
            <person name="Malfatti S."/>
            <person name="Shin M."/>
            <person name="Vergez L."/>
            <person name="Schmutz J."/>
            <person name="Larimer F."/>
            <person name="Land M."/>
            <person name="Hauser L."/>
            <person name="Richardson P."/>
        </authorList>
    </citation>
    <scope>NUCLEOTIDE SEQUENCE [LARGE SCALE GENOMIC DNA]</scope>
    <source>
        <strain>ATCC 25017 / CCUG 19701 / FSC 153 / O#319-036</strain>
    </source>
</reference>
<evidence type="ECO:0000255" key="1">
    <source>
        <dbReference type="HAMAP-Rule" id="MF_00071"/>
    </source>
</evidence>
<keyword id="KW-0997">Cell inner membrane</keyword>
<keyword id="KW-1003">Cell membrane</keyword>
<keyword id="KW-0342">GTP-binding</keyword>
<keyword id="KW-0378">Hydrolase</keyword>
<keyword id="KW-0472">Membrane</keyword>
<keyword id="KW-0547">Nucleotide-binding</keyword>
<keyword id="KW-0648">Protein biosynthesis</keyword>
<proteinExistence type="inferred from homology"/>